<accession>A9WWH3</accession>
<evidence type="ECO:0000255" key="1">
    <source>
        <dbReference type="HAMAP-Rule" id="MF_00671"/>
    </source>
</evidence>
<protein>
    <recommendedName>
        <fullName evidence="1">Tol-Pal system protein TolB</fullName>
    </recommendedName>
</protein>
<feature type="signal peptide" evidence="1">
    <location>
        <begin position="1"/>
        <end position="33"/>
    </location>
</feature>
<feature type="chain" id="PRO_1000082941" description="Tol-Pal system protein TolB" evidence="1">
    <location>
        <begin position="34"/>
        <end position="443"/>
    </location>
</feature>
<dbReference type="EMBL" id="CP000912">
    <property type="protein sequence ID" value="ABY40109.1"/>
    <property type="molecule type" value="Genomic_DNA"/>
</dbReference>
<dbReference type="RefSeq" id="WP_006074473.1">
    <property type="nucleotide sequence ID" value="NC_010167.1"/>
</dbReference>
<dbReference type="SMR" id="A9WWH3"/>
<dbReference type="KEGG" id="bmt:BSUIS_B1172"/>
<dbReference type="HOGENOM" id="CLU_047123_0_0_5"/>
<dbReference type="Proteomes" id="UP000008545">
    <property type="component" value="Chromosome II"/>
</dbReference>
<dbReference type="GO" id="GO:0042597">
    <property type="term" value="C:periplasmic space"/>
    <property type="evidence" value="ECO:0007669"/>
    <property type="project" value="UniProtKB-SubCell"/>
</dbReference>
<dbReference type="GO" id="GO:0051301">
    <property type="term" value="P:cell division"/>
    <property type="evidence" value="ECO:0007669"/>
    <property type="project" value="UniProtKB-UniRule"/>
</dbReference>
<dbReference type="GO" id="GO:0017038">
    <property type="term" value="P:protein import"/>
    <property type="evidence" value="ECO:0007669"/>
    <property type="project" value="InterPro"/>
</dbReference>
<dbReference type="Gene3D" id="2.120.10.30">
    <property type="entry name" value="TolB, C-terminal domain"/>
    <property type="match status" value="1"/>
</dbReference>
<dbReference type="Gene3D" id="3.40.50.10070">
    <property type="entry name" value="TolB, N-terminal domain"/>
    <property type="match status" value="1"/>
</dbReference>
<dbReference type="HAMAP" id="MF_00671">
    <property type="entry name" value="TolB"/>
    <property type="match status" value="1"/>
</dbReference>
<dbReference type="InterPro" id="IPR011042">
    <property type="entry name" value="6-blade_b-propeller_TolB-like"/>
</dbReference>
<dbReference type="InterPro" id="IPR011659">
    <property type="entry name" value="PD40"/>
</dbReference>
<dbReference type="InterPro" id="IPR014167">
    <property type="entry name" value="Tol-Pal_TolB"/>
</dbReference>
<dbReference type="InterPro" id="IPR007195">
    <property type="entry name" value="TolB_N"/>
</dbReference>
<dbReference type="NCBIfam" id="TIGR02800">
    <property type="entry name" value="propeller_TolB"/>
    <property type="match status" value="1"/>
</dbReference>
<dbReference type="PANTHER" id="PTHR36842:SF1">
    <property type="entry name" value="PROTEIN TOLB"/>
    <property type="match status" value="1"/>
</dbReference>
<dbReference type="PANTHER" id="PTHR36842">
    <property type="entry name" value="PROTEIN TOLB HOMOLOG"/>
    <property type="match status" value="1"/>
</dbReference>
<dbReference type="Pfam" id="PF07676">
    <property type="entry name" value="PD40"/>
    <property type="match status" value="3"/>
</dbReference>
<dbReference type="Pfam" id="PF04052">
    <property type="entry name" value="TolB_N"/>
    <property type="match status" value="1"/>
</dbReference>
<dbReference type="SUPFAM" id="SSF52964">
    <property type="entry name" value="TolB, N-terminal domain"/>
    <property type="match status" value="1"/>
</dbReference>
<dbReference type="SUPFAM" id="SSF69304">
    <property type="entry name" value="Tricorn protease N-terminal domain"/>
    <property type="match status" value="1"/>
</dbReference>
<sequence length="443" mass="48479">MKIGIINTKIRTVFSAFACMIAASLVCTMPARAVVEININKGVIEPLPIAITDFLSADQLGSNITSVIAADLERSGLFAPIDKGAFIEKISNPDAAPRFEDWKVINAQALVTGRITKQPDGRLKAEFHLWDTFGGQQMIGQQFFTTPDNWRRVAHIIADAIYERLTGDKGYFDTRVVFVDESGPAQKRVKRLAIMDQDGANVRFISDGRALSLTPRFSPNRQEVTYMSFEGGSPKVYLLQLETGQRELVGNFPGMTIAPRFSPDGQKVVMSLLQDDGSANIYTMDLRNRTTTRLTSSQAIDTGASYSPDGSQIVFTSDRGGRPQLYVMGADGSNPRRISMGDGSYSTPVWSPRGDLIAFTKQSQGQFSIGVTKTDGSGERLLTSGFHNEGPTWAPNGRVLMFFRKAAGAGGPKLFTIDLTGRNERQIQTPNFASDPAWSPLLE</sequence>
<keyword id="KW-0131">Cell cycle</keyword>
<keyword id="KW-0132">Cell division</keyword>
<keyword id="KW-0574">Periplasm</keyword>
<keyword id="KW-0732">Signal</keyword>
<reference key="1">
    <citation type="submission" date="2007-12" db="EMBL/GenBank/DDBJ databases">
        <title>Brucella suis ATCC 23445 whole genome shotgun sequencing project.</title>
        <authorList>
            <person name="Setubal J.C."/>
            <person name="Bowns C."/>
            <person name="Boyle S."/>
            <person name="Crasta O.R."/>
            <person name="Czar M.J."/>
            <person name="Dharmanolla C."/>
            <person name="Gillespie J.J."/>
            <person name="Kenyon R.W."/>
            <person name="Lu J."/>
            <person name="Mane S."/>
            <person name="Mohapatra S."/>
            <person name="Nagrani S."/>
            <person name="Purkayastha A."/>
            <person name="Rajasimha H.K."/>
            <person name="Shallom J.M."/>
            <person name="Shallom S."/>
            <person name="Shukla M."/>
            <person name="Snyder E.E."/>
            <person name="Sobral B.W."/>
            <person name="Wattam A.R."/>
            <person name="Will R."/>
            <person name="Williams K."/>
            <person name="Yoo H."/>
            <person name="Bruce D."/>
            <person name="Detter C."/>
            <person name="Munk C."/>
            <person name="Brettin T.S."/>
        </authorList>
    </citation>
    <scope>NUCLEOTIDE SEQUENCE [LARGE SCALE GENOMIC DNA]</scope>
    <source>
        <strain>ATCC 23445 / NCTC 10510</strain>
    </source>
</reference>
<name>TOLB_BRUSI</name>
<proteinExistence type="inferred from homology"/>
<comment type="function">
    <text evidence="1">Part of the Tol-Pal system, which plays a role in outer membrane invagination during cell division and is important for maintaining outer membrane integrity.</text>
</comment>
<comment type="subunit">
    <text evidence="1">The Tol-Pal system is composed of five core proteins: the inner membrane proteins TolA, TolQ and TolR, the periplasmic protein TolB and the outer membrane protein Pal. They form a network linking the inner and outer membranes and the peptidoglycan layer.</text>
</comment>
<comment type="subcellular location">
    <subcellularLocation>
        <location evidence="1">Periplasm</location>
    </subcellularLocation>
</comment>
<comment type="similarity">
    <text evidence="1">Belongs to the TolB family.</text>
</comment>
<gene>
    <name evidence="1" type="primary">tolB</name>
    <name type="ordered locus">BSUIS_B1172</name>
</gene>
<organism>
    <name type="scientific">Brucella suis (strain ATCC 23445 / NCTC 10510)</name>
    <dbReference type="NCBI Taxonomy" id="470137"/>
    <lineage>
        <taxon>Bacteria</taxon>
        <taxon>Pseudomonadati</taxon>
        <taxon>Pseudomonadota</taxon>
        <taxon>Alphaproteobacteria</taxon>
        <taxon>Hyphomicrobiales</taxon>
        <taxon>Brucellaceae</taxon>
        <taxon>Brucella/Ochrobactrum group</taxon>
        <taxon>Brucella</taxon>
    </lineage>
</organism>